<keyword id="KW-0903">Direct protein sequencing</keyword>
<keyword id="KW-0372">Hormone</keyword>
<keyword id="KW-1185">Reference proteome</keyword>
<keyword id="KW-0964">Secreted</keyword>
<comment type="function">
    <text>Promotes hydrolysis of glycogen and lipids, and raises the blood sugar level.</text>
</comment>
<comment type="subcellular location">
    <subcellularLocation>
        <location>Secreted</location>
    </subcellularLocation>
</comment>
<comment type="induction">
    <text>Produced in the A cells of the islets of Langerhans in response to a drop in blood sugar concentration.</text>
</comment>
<comment type="similarity">
    <text evidence="1">Belongs to the glucagon family.</text>
</comment>
<gene>
    <name type="primary">gcg1</name>
</gene>
<organism>
    <name type="scientific">Oreochromis niloticus</name>
    <name type="common">Nile tilapia</name>
    <name type="synonym">Tilapia nilotica</name>
    <dbReference type="NCBI Taxonomy" id="8128"/>
    <lineage>
        <taxon>Eukaryota</taxon>
        <taxon>Metazoa</taxon>
        <taxon>Chordata</taxon>
        <taxon>Craniata</taxon>
        <taxon>Vertebrata</taxon>
        <taxon>Euteleostomi</taxon>
        <taxon>Actinopterygii</taxon>
        <taxon>Neopterygii</taxon>
        <taxon>Teleostei</taxon>
        <taxon>Neoteleostei</taxon>
        <taxon>Acanthomorphata</taxon>
        <taxon>Ovalentaria</taxon>
        <taxon>Cichlomorphae</taxon>
        <taxon>Cichliformes</taxon>
        <taxon>Cichlidae</taxon>
        <taxon>African cichlids</taxon>
        <taxon>Pseudocrenilabrinae</taxon>
        <taxon>Oreochromini</taxon>
        <taxon>Oreochromis</taxon>
    </lineage>
</organism>
<accession>P81026</accession>
<evidence type="ECO:0000305" key="1"/>
<name>GLUC1_ORENI</name>
<protein>
    <recommendedName>
        <fullName>Glucagon-1</fullName>
    </recommendedName>
    <alternativeName>
        <fullName>Glucagon I</fullName>
    </alternativeName>
</protein>
<dbReference type="SMR" id="P81026"/>
<dbReference type="STRING" id="8128.ENSONIP00000011207"/>
<dbReference type="eggNOG" id="ENOG502RYPR">
    <property type="taxonomic scope" value="Eukaryota"/>
</dbReference>
<dbReference type="HOGENOM" id="CLU_090687_2_0_1"/>
<dbReference type="InParanoid" id="P81026"/>
<dbReference type="Proteomes" id="UP000005207">
    <property type="component" value="Unplaced"/>
</dbReference>
<dbReference type="GO" id="GO:0005576">
    <property type="term" value="C:extracellular region"/>
    <property type="evidence" value="ECO:0007669"/>
    <property type="project" value="UniProtKB-SubCell"/>
</dbReference>
<dbReference type="GO" id="GO:0031769">
    <property type="term" value="F:glucagon receptor binding"/>
    <property type="evidence" value="ECO:0007669"/>
    <property type="project" value="TreeGrafter"/>
</dbReference>
<dbReference type="GO" id="GO:0005179">
    <property type="term" value="F:hormone activity"/>
    <property type="evidence" value="ECO:0007669"/>
    <property type="project" value="UniProtKB-KW"/>
</dbReference>
<dbReference type="GO" id="GO:0042594">
    <property type="term" value="P:response to starvation"/>
    <property type="evidence" value="ECO:0007669"/>
    <property type="project" value="TreeGrafter"/>
</dbReference>
<dbReference type="Gene3D" id="6.10.250.590">
    <property type="match status" value="1"/>
</dbReference>
<dbReference type="InterPro" id="IPR015550">
    <property type="entry name" value="Glucagon"/>
</dbReference>
<dbReference type="InterPro" id="IPR000532">
    <property type="entry name" value="Glucagon_GIP_secretin_VIP"/>
</dbReference>
<dbReference type="PANTHER" id="PTHR11418">
    <property type="entry name" value="GLUCAGON"/>
    <property type="match status" value="1"/>
</dbReference>
<dbReference type="PANTHER" id="PTHR11418:SF0">
    <property type="entry name" value="PRO-GLUCAGON"/>
    <property type="match status" value="1"/>
</dbReference>
<dbReference type="Pfam" id="PF00123">
    <property type="entry name" value="Hormone_2"/>
    <property type="match status" value="1"/>
</dbReference>
<dbReference type="PRINTS" id="PR00275">
    <property type="entry name" value="GLUCAGON"/>
</dbReference>
<dbReference type="SMART" id="SM00070">
    <property type="entry name" value="GLUCA"/>
    <property type="match status" value="1"/>
</dbReference>
<dbReference type="PROSITE" id="PS00260">
    <property type="entry name" value="GLUCAGON"/>
    <property type="match status" value="1"/>
</dbReference>
<feature type="peptide" id="PRO_0000044742" description="Glucagon-1">
    <location>
        <begin position="1"/>
        <end position="36"/>
    </location>
</feature>
<proteinExistence type="evidence at protein level"/>
<sequence length="36" mass="4252">HSEGTFSNDYSKYLEDRKAQDFVRWLMNNKRSGAAE</sequence>
<reference key="1">
    <citation type="journal article" date="1995" name="Comp. Biochem. Physiol.">
        <title>Characterization of the pancreatic hormones from the Brockmann body of the tilapia: implications for islet xenograft studies.</title>
        <authorList>
            <person name="Nguyen T.M."/>
            <person name="Wright J.R. Jr."/>
            <person name="Nielsen P.F."/>
            <person name="Conlon J.M."/>
        </authorList>
    </citation>
    <scope>PROTEIN SEQUENCE</scope>
</reference>